<comment type="function">
    <text evidence="1">One of the essential components for the initiation of protein synthesis. Protects formylmethionyl-tRNA from spontaneous hydrolysis and promotes its binding to the 30S ribosomal subunits. Also involved in the hydrolysis of GTP during the formation of the 70S ribosomal complex (By similarity).</text>
</comment>
<comment type="subcellular location">
    <subcellularLocation>
        <location>Plastid</location>
        <location>Chloroplast</location>
    </subcellularLocation>
</comment>
<comment type="similarity">
    <text evidence="3">Belongs to the TRAFAC class translation factor GTPase superfamily. Classic translation factor GTPase family. IF-2 subfamily.</text>
</comment>
<evidence type="ECO:0000250" key="1"/>
<evidence type="ECO:0000256" key="2">
    <source>
        <dbReference type="SAM" id="MobiDB-lite"/>
    </source>
</evidence>
<evidence type="ECO:0000305" key="3"/>
<protein>
    <recommendedName>
        <fullName>Translation initiation factor IF-2, chloroplastic</fullName>
    </recommendedName>
</protein>
<name>IF2C_PYRYE</name>
<dbReference type="EMBL" id="AP006715">
    <property type="protein sequence ID" value="BAE92381.1"/>
    <property type="molecule type" value="Genomic_DNA"/>
</dbReference>
<dbReference type="RefSeq" id="YP_536938.1">
    <property type="nucleotide sequence ID" value="NC_007932.1"/>
</dbReference>
<dbReference type="SMR" id="Q1XDN0"/>
<dbReference type="GeneID" id="3978891"/>
<dbReference type="GO" id="GO:0009507">
    <property type="term" value="C:chloroplast"/>
    <property type="evidence" value="ECO:0007669"/>
    <property type="project" value="UniProtKB-SubCell"/>
</dbReference>
<dbReference type="GO" id="GO:0005525">
    <property type="term" value="F:GTP binding"/>
    <property type="evidence" value="ECO:0007669"/>
    <property type="project" value="UniProtKB-KW"/>
</dbReference>
<dbReference type="GO" id="GO:0003924">
    <property type="term" value="F:GTPase activity"/>
    <property type="evidence" value="ECO:0007669"/>
    <property type="project" value="UniProtKB-UniRule"/>
</dbReference>
<dbReference type="GO" id="GO:0003743">
    <property type="term" value="F:translation initiation factor activity"/>
    <property type="evidence" value="ECO:0007669"/>
    <property type="project" value="UniProtKB-UniRule"/>
</dbReference>
<dbReference type="CDD" id="cd01887">
    <property type="entry name" value="IF2_eIF5B"/>
    <property type="match status" value="1"/>
</dbReference>
<dbReference type="CDD" id="cd03702">
    <property type="entry name" value="IF2_mtIF2_II"/>
    <property type="match status" value="1"/>
</dbReference>
<dbReference type="CDD" id="cd03692">
    <property type="entry name" value="mtIF2_IVc"/>
    <property type="match status" value="1"/>
</dbReference>
<dbReference type="FunFam" id="2.40.30.10:FF:000008">
    <property type="entry name" value="Translation initiation factor IF-2"/>
    <property type="match status" value="1"/>
</dbReference>
<dbReference type="FunFam" id="3.40.50.10050:FF:000001">
    <property type="entry name" value="Translation initiation factor IF-2"/>
    <property type="match status" value="1"/>
</dbReference>
<dbReference type="FunFam" id="3.40.50.300:FF:000019">
    <property type="entry name" value="Translation initiation factor IF-2"/>
    <property type="match status" value="1"/>
</dbReference>
<dbReference type="Gene3D" id="3.40.50.300">
    <property type="entry name" value="P-loop containing nucleotide triphosphate hydrolases"/>
    <property type="match status" value="1"/>
</dbReference>
<dbReference type="Gene3D" id="2.40.30.10">
    <property type="entry name" value="Translation factors"/>
    <property type="match status" value="2"/>
</dbReference>
<dbReference type="Gene3D" id="3.40.50.10050">
    <property type="entry name" value="Translation initiation factor IF- 2, domain 3"/>
    <property type="match status" value="1"/>
</dbReference>
<dbReference type="HAMAP" id="MF_00100_B">
    <property type="entry name" value="IF_2_B"/>
    <property type="match status" value="1"/>
</dbReference>
<dbReference type="InterPro" id="IPR053905">
    <property type="entry name" value="EF-G-like_DII"/>
</dbReference>
<dbReference type="InterPro" id="IPR044145">
    <property type="entry name" value="IF2_II"/>
</dbReference>
<dbReference type="InterPro" id="IPR006847">
    <property type="entry name" value="IF2_N"/>
</dbReference>
<dbReference type="InterPro" id="IPR027417">
    <property type="entry name" value="P-loop_NTPase"/>
</dbReference>
<dbReference type="InterPro" id="IPR005225">
    <property type="entry name" value="Small_GTP-bd"/>
</dbReference>
<dbReference type="InterPro" id="IPR000795">
    <property type="entry name" value="T_Tr_GTP-bd_dom"/>
</dbReference>
<dbReference type="InterPro" id="IPR000178">
    <property type="entry name" value="TF_IF2_bacterial-like"/>
</dbReference>
<dbReference type="InterPro" id="IPR015760">
    <property type="entry name" value="TIF_IF2"/>
</dbReference>
<dbReference type="InterPro" id="IPR023115">
    <property type="entry name" value="TIF_IF2_dom3"/>
</dbReference>
<dbReference type="InterPro" id="IPR036925">
    <property type="entry name" value="TIF_IF2_dom3_sf"/>
</dbReference>
<dbReference type="InterPro" id="IPR009000">
    <property type="entry name" value="Transl_B-barrel_sf"/>
</dbReference>
<dbReference type="NCBIfam" id="TIGR00487">
    <property type="entry name" value="IF-2"/>
    <property type="match status" value="1"/>
</dbReference>
<dbReference type="NCBIfam" id="TIGR00231">
    <property type="entry name" value="small_GTP"/>
    <property type="match status" value="1"/>
</dbReference>
<dbReference type="PANTHER" id="PTHR43381:SF5">
    <property type="entry name" value="TR-TYPE G DOMAIN-CONTAINING PROTEIN"/>
    <property type="match status" value="1"/>
</dbReference>
<dbReference type="PANTHER" id="PTHR43381">
    <property type="entry name" value="TRANSLATION INITIATION FACTOR IF-2-RELATED"/>
    <property type="match status" value="1"/>
</dbReference>
<dbReference type="Pfam" id="PF22042">
    <property type="entry name" value="EF-G_D2"/>
    <property type="match status" value="1"/>
</dbReference>
<dbReference type="Pfam" id="PF00009">
    <property type="entry name" value="GTP_EFTU"/>
    <property type="match status" value="1"/>
</dbReference>
<dbReference type="Pfam" id="PF11987">
    <property type="entry name" value="IF-2"/>
    <property type="match status" value="1"/>
</dbReference>
<dbReference type="Pfam" id="PF04760">
    <property type="entry name" value="IF2_N"/>
    <property type="match status" value="1"/>
</dbReference>
<dbReference type="PRINTS" id="PR00315">
    <property type="entry name" value="ELONGATNFCT"/>
</dbReference>
<dbReference type="SUPFAM" id="SSF52156">
    <property type="entry name" value="Initiation factor IF2/eIF5b, domain 3"/>
    <property type="match status" value="1"/>
</dbReference>
<dbReference type="SUPFAM" id="SSF52540">
    <property type="entry name" value="P-loop containing nucleoside triphosphate hydrolases"/>
    <property type="match status" value="1"/>
</dbReference>
<dbReference type="SUPFAM" id="SSF50447">
    <property type="entry name" value="Translation proteins"/>
    <property type="match status" value="2"/>
</dbReference>
<dbReference type="PROSITE" id="PS51722">
    <property type="entry name" value="G_TR_2"/>
    <property type="match status" value="1"/>
</dbReference>
<proteinExistence type="inferred from homology"/>
<keyword id="KW-0150">Chloroplast</keyword>
<keyword id="KW-0342">GTP-binding</keyword>
<keyword id="KW-0396">Initiation factor</keyword>
<keyword id="KW-0547">Nucleotide-binding</keyword>
<keyword id="KW-0934">Plastid</keyword>
<keyword id="KW-0648">Protein biosynthesis</keyword>
<geneLocation type="chloroplast"/>
<reference key="1">
    <citation type="submission" date="2003-11" db="EMBL/GenBank/DDBJ databases">
        <title>Whole genome sequence of Porphyra yezoensis chloroplast.</title>
        <authorList>
            <person name="Kunimoto M."/>
            <person name="Morishima K."/>
            <person name="Yoshikawa M."/>
            <person name="Fukuda S."/>
            <person name="Kobayashi T."/>
            <person name="Kobayashi M."/>
            <person name="Okazaki T."/>
            <person name="Ohara I."/>
            <person name="Nakayama I."/>
        </authorList>
    </citation>
    <scope>NUCLEOTIDE SEQUENCE [LARGE SCALE GENOMIC DNA]</scope>
    <source>
        <strain>U-51</strain>
    </source>
</reference>
<organism>
    <name type="scientific">Pyropia yezoensis</name>
    <name type="common">Susabi-nori</name>
    <name type="synonym">Porphyra yezoensis</name>
    <dbReference type="NCBI Taxonomy" id="2788"/>
    <lineage>
        <taxon>Eukaryota</taxon>
        <taxon>Rhodophyta</taxon>
        <taxon>Bangiophyceae</taxon>
        <taxon>Bangiales</taxon>
        <taxon>Bangiaceae</taxon>
        <taxon>Pyropia</taxon>
    </lineage>
</organism>
<gene>
    <name type="primary">infB</name>
</gene>
<sequence length="768" mass="84825">MFLNNQNFENRSSRSSSNINSSETIVDLKNPQIIYKIRLESVNNDNLLNLDLDKSESHTGGEQHLELSSPPKLDKKSKNFNKIHDLVDSKKNKNRQRKKIKTKIHIDDDDDNFRDSNSNVSQTAGDLAISLMRPPKPKVEVVKKLTSNKKSIRQKKVAVTPSQNSASIQSNSPPESISITNPLTIQELSKLICVQETDIIKYLFLKRISVTMNQTIDASIISSVADNFGIAVESNVKENNNGLSSNLDNSNAFYETGNYIKRPPIVTVMGHVDHGKTTLLDYIRKSNNANKEIGGITQAIAAYEVEYIKKDNKQKIVFLDTPGHEAFTSMRSRGANLTDVAIIIIAADDGVKPQTIEAINHIQKANVPFVIAISKIDKAGSNTDIIEQDLLKYNVMSEKLGGQVPIIPISSLTGQNVDKLLETITLLAELEDLKADPTQPAQGIIIEAHLDKSHGPVATLLIQNGTLNISDNLVIGSAYAKIRVIINNAKEKINLAIPSSVVEIWGLSSVPATGEIALAVKSDKEAKLKAIENTSKDSSIIQKQRALNSRITLDTLKNTNSKDISKQISLIIKTDNQGSTEAILDSLSQFPQSKVQLNVVSIMPGEITATDVELASTTNSTLIGFNTNFAPGTKQASAKSNILIENYQIIYALIEDIKRRMEDLLDPEYSEVPVGEAEVSTVFSLANRKIAGCRVINNKLLKNSWIKVIREEKVIYQGKIESLKRVREDVEEIQAGNECGIFISEFQLWQSGDKIHSFDLIPKQKSLF</sequence>
<accession>Q1XDN0</accession>
<feature type="chain" id="PRO_0000275386" description="Translation initiation factor IF-2, chloroplastic">
    <location>
        <begin position="1"/>
        <end position="768"/>
    </location>
</feature>
<feature type="domain" description="tr-type G">
    <location>
        <begin position="261"/>
        <end position="434"/>
    </location>
</feature>
<feature type="region of interest" description="Disordered" evidence="2">
    <location>
        <begin position="1"/>
        <end position="20"/>
    </location>
</feature>
<feature type="region of interest" description="Disordered" evidence="2">
    <location>
        <begin position="54"/>
        <end position="77"/>
    </location>
</feature>
<feature type="region of interest" description="Disordered" evidence="2">
    <location>
        <begin position="155"/>
        <end position="176"/>
    </location>
</feature>
<feature type="compositionally biased region" description="Basic and acidic residues" evidence="2">
    <location>
        <begin position="54"/>
        <end position="65"/>
    </location>
</feature>
<feature type="compositionally biased region" description="Polar residues" evidence="2">
    <location>
        <begin position="160"/>
        <end position="176"/>
    </location>
</feature>
<feature type="binding site" evidence="1">
    <location>
        <begin position="270"/>
        <end position="277"/>
    </location>
    <ligand>
        <name>GTP</name>
        <dbReference type="ChEBI" id="CHEBI:37565"/>
    </ligand>
</feature>
<feature type="binding site" evidence="1">
    <location>
        <begin position="320"/>
        <end position="324"/>
    </location>
    <ligand>
        <name>GTP</name>
        <dbReference type="ChEBI" id="CHEBI:37565"/>
    </ligand>
</feature>
<feature type="binding site" evidence="1">
    <location>
        <begin position="374"/>
        <end position="377"/>
    </location>
    <ligand>
        <name>GTP</name>
        <dbReference type="ChEBI" id="CHEBI:37565"/>
    </ligand>
</feature>